<dbReference type="EMBL" id="AF322648">
    <property type="protein sequence ID" value="AAL33884.1"/>
    <property type="molecule type" value="mRNA"/>
</dbReference>
<dbReference type="EMBL" id="CH471126">
    <property type="protein sequence ID" value="EAW57205.1"/>
    <property type="molecule type" value="Genomic_DNA"/>
</dbReference>
<dbReference type="EMBL" id="BC137020">
    <property type="protein sequence ID" value="AAI37021.1"/>
    <property type="molecule type" value="mRNA"/>
</dbReference>
<dbReference type="EMBL" id="BC137021">
    <property type="protein sequence ID" value="AAI37022.1"/>
    <property type="molecule type" value="mRNA"/>
</dbReference>
<dbReference type="CCDS" id="CCDS33040.1"/>
<dbReference type="RefSeq" id="NP_001007562.1">
    <property type="nucleotide sequence ID" value="NM_001007561.3"/>
</dbReference>
<dbReference type="RefSeq" id="NP_001375238.1">
    <property type="nucleotide sequence ID" value="NM_001388309.1"/>
</dbReference>
<dbReference type="RefSeq" id="XP_005258572.1">
    <property type="nucleotide sequence ID" value="XM_005258515.3"/>
</dbReference>
<dbReference type="PDB" id="8Q6Q">
    <property type="method" value="X-ray"/>
    <property type="resolution" value="1.80 A"/>
    <property type="chains" value="C/D=1-192"/>
</dbReference>
<dbReference type="PDB" id="8Q7K">
    <property type="method" value="X-ray"/>
    <property type="resolution" value="1.60 A"/>
    <property type="chains" value="C/D=417-425"/>
</dbReference>
<dbReference type="PDBsum" id="8Q6Q"/>
<dbReference type="PDBsum" id="8Q7K"/>
<dbReference type="SMR" id="Q8WZA9"/>
<dbReference type="BioGRID" id="125975">
    <property type="interactions" value="27"/>
</dbReference>
<dbReference type="FunCoup" id="Q8WZA9">
    <property type="interactions" value="368"/>
</dbReference>
<dbReference type="IntAct" id="Q8WZA9">
    <property type="interactions" value="22"/>
</dbReference>
<dbReference type="MINT" id="Q8WZA9"/>
<dbReference type="STRING" id="9606.ENSP00000387535"/>
<dbReference type="GlyGen" id="Q8WZA9">
    <property type="glycosylation" value="1 site, 1 O-linked glycan (1 site)"/>
</dbReference>
<dbReference type="iPTMnet" id="Q8WZA9"/>
<dbReference type="MetOSite" id="Q8WZA9"/>
<dbReference type="PhosphoSitePlus" id="Q8WZA9"/>
<dbReference type="BioMuta" id="IRGQ"/>
<dbReference type="DMDM" id="74751646"/>
<dbReference type="jPOST" id="Q8WZA9"/>
<dbReference type="MassIVE" id="Q8WZA9"/>
<dbReference type="PaxDb" id="9606-ENSP00000387535"/>
<dbReference type="PeptideAtlas" id="Q8WZA9"/>
<dbReference type="ProteomicsDB" id="75248"/>
<dbReference type="Pumba" id="Q8WZA9"/>
<dbReference type="Antibodypedia" id="48982">
    <property type="antibodies" value="97 antibodies from 19 providers"/>
</dbReference>
<dbReference type="DNASU" id="126298"/>
<dbReference type="Ensembl" id="ENST00000422989.6">
    <property type="protein sequence ID" value="ENSP00000387535.1"/>
    <property type="gene ID" value="ENSG00000167378.10"/>
</dbReference>
<dbReference type="Ensembl" id="ENST00000602269.2">
    <property type="protein sequence ID" value="ENSP00000472250.1"/>
    <property type="gene ID" value="ENSG00000167378.10"/>
</dbReference>
<dbReference type="GeneID" id="126298"/>
<dbReference type="KEGG" id="hsa:126298"/>
<dbReference type="MANE-Select" id="ENST00000422989.6">
    <property type="protein sequence ID" value="ENSP00000387535.1"/>
    <property type="RefSeq nucleotide sequence ID" value="NM_001007561.3"/>
    <property type="RefSeq protein sequence ID" value="NP_001007562.1"/>
</dbReference>
<dbReference type="UCSC" id="uc002oww.3">
    <property type="organism name" value="human"/>
</dbReference>
<dbReference type="AGR" id="HGNC:24868"/>
<dbReference type="CTD" id="126298"/>
<dbReference type="DisGeNET" id="126298"/>
<dbReference type="GeneCards" id="IRGQ"/>
<dbReference type="HGNC" id="HGNC:24868">
    <property type="gene designation" value="IRGQ"/>
</dbReference>
<dbReference type="HPA" id="ENSG00000167378">
    <property type="expression patterns" value="Low tissue specificity"/>
</dbReference>
<dbReference type="MalaCards" id="IRGQ"/>
<dbReference type="MIM" id="621081">
    <property type="type" value="gene"/>
</dbReference>
<dbReference type="neXtProt" id="NX_Q8WZA9"/>
<dbReference type="OpenTargets" id="ENSG00000167378"/>
<dbReference type="PharmGKB" id="PA142671653"/>
<dbReference type="VEuPathDB" id="HostDB:ENSG00000167378"/>
<dbReference type="eggNOG" id="ENOG502RY8G">
    <property type="taxonomic scope" value="Eukaryota"/>
</dbReference>
<dbReference type="GeneTree" id="ENSGT00510000048991"/>
<dbReference type="HOGENOM" id="CLU_037636_0_0_1"/>
<dbReference type="InParanoid" id="Q8WZA9"/>
<dbReference type="OMA" id="RTHFPGP"/>
<dbReference type="OrthoDB" id="9837823at2759"/>
<dbReference type="PAN-GO" id="Q8WZA9">
    <property type="GO annotations" value="0 GO annotations based on evolutionary models"/>
</dbReference>
<dbReference type="PhylomeDB" id="Q8WZA9"/>
<dbReference type="TreeFam" id="TF331897"/>
<dbReference type="PathwayCommons" id="Q8WZA9"/>
<dbReference type="SignaLink" id="Q8WZA9"/>
<dbReference type="BioGRID-ORCS" id="126298">
    <property type="hits" value="11 hits in 1152 CRISPR screens"/>
</dbReference>
<dbReference type="CD-CODE" id="FB4E32DD">
    <property type="entry name" value="Presynaptic clusters and postsynaptic densities"/>
</dbReference>
<dbReference type="ChiTaRS" id="IRGQ">
    <property type="organism name" value="human"/>
</dbReference>
<dbReference type="GenomeRNAi" id="126298"/>
<dbReference type="Pharos" id="Q8WZA9">
    <property type="development level" value="Tdark"/>
</dbReference>
<dbReference type="PRO" id="PR:Q8WZA9"/>
<dbReference type="Proteomes" id="UP000005640">
    <property type="component" value="Chromosome 19"/>
</dbReference>
<dbReference type="RNAct" id="Q8WZA9">
    <property type="molecule type" value="protein"/>
</dbReference>
<dbReference type="Bgee" id="ENSG00000167378">
    <property type="expression patterns" value="Expressed in type B pancreatic cell and 204 other cell types or tissues"/>
</dbReference>
<dbReference type="ExpressionAtlas" id="Q8WZA9">
    <property type="expression patterns" value="baseline and differential"/>
</dbReference>
<dbReference type="GO" id="GO:0005776">
    <property type="term" value="C:autophagosome"/>
    <property type="evidence" value="ECO:0000314"/>
    <property type="project" value="UniProtKB"/>
</dbReference>
<dbReference type="GO" id="GO:0005764">
    <property type="term" value="C:lysosome"/>
    <property type="evidence" value="ECO:0000314"/>
    <property type="project" value="UniProtKB"/>
</dbReference>
<dbReference type="GO" id="GO:0030674">
    <property type="term" value="F:protein-macromolecule adaptor activity"/>
    <property type="evidence" value="ECO:0000314"/>
    <property type="project" value="UniProtKB"/>
</dbReference>
<dbReference type="GO" id="GO:0010508">
    <property type="term" value="P:positive regulation of autophagy"/>
    <property type="evidence" value="ECO:0000314"/>
    <property type="project" value="UniProtKB"/>
</dbReference>
<dbReference type="GO" id="GO:0006515">
    <property type="term" value="P:protein quality control for misfolded or incompletely synthesized proteins"/>
    <property type="evidence" value="ECO:0000314"/>
    <property type="project" value="UniProtKB"/>
</dbReference>
<dbReference type="GO" id="GO:0061753">
    <property type="term" value="P:substrate localization to autophagosome"/>
    <property type="evidence" value="ECO:0000314"/>
    <property type="project" value="UniProtKB"/>
</dbReference>
<dbReference type="InterPro" id="IPR030385">
    <property type="entry name" value="G_IRG_dom"/>
</dbReference>
<dbReference type="InterPro" id="IPR040070">
    <property type="entry name" value="IRGQ"/>
</dbReference>
<dbReference type="PANTHER" id="PTHR19364">
    <property type="entry name" value="IMMUNITY-RELATED GTPASE FAMILY Q PROTEIN"/>
    <property type="match status" value="1"/>
</dbReference>
<dbReference type="PANTHER" id="PTHR19364:SF2">
    <property type="entry name" value="IMMUNITY-RELATED GTPASE FAMILY Q PROTEIN"/>
    <property type="match status" value="1"/>
</dbReference>
<dbReference type="PROSITE" id="PS51716">
    <property type="entry name" value="G_IRG"/>
    <property type="match status" value="1"/>
</dbReference>
<gene>
    <name evidence="5 8" type="primary">IRGQ</name>
    <name type="synonym">IRGQ1</name>
    <name evidence="6" type="ORF">FKSG27</name>
</gene>
<accession>Q8WZA9</accession>
<accession>B2RNP3</accession>
<comment type="function">
    <text evidence="4">Autophagy receptor that specifically promotes clearance of misfolded MHC class I molecules by targeting them to the lysosome for degradation (PubMed:39481378). Acts as a molecular adapter that specifically recognizes and binds (1) misfolded MHC class I molecules following their ubiquitination, as well as (2) autophagy-related proteins, promoting the recruitment of misfolded MHC class I molecules to autophagy machinery for degradation (PubMed:39481378). Degradation of misfolded MHC class I molecules is essential to prevent accumulation of defective MHC class I complexes at the surface of CD8(+) T-cells and prevent a stronger T-cell-mediated response (PubMed:39481378). In contrast to other members of the family, does not show GTPase activity (PubMed:39481378).</text>
</comment>
<comment type="subunit">
    <text evidence="4">Interacts (via LIR motif 1) with GABARAPL2 (PubMed:39481378). Interacts (via LIR motif 2) with MAP1LC3B/LC3B (PubMed:39481378).</text>
</comment>
<comment type="interaction">
    <interactant intactId="EBI-1055331">
        <id>Q8WZA9</id>
    </interactant>
    <interactant intactId="EBI-720768">
        <id>Q9H492</id>
        <label>MAP1LC3A</label>
    </interactant>
    <organismsDiffer>false</organismsDiffer>
    <experiments>4</experiments>
</comment>
<comment type="interaction">
    <interactant intactId="EBI-1055331">
        <id>Q8WZA9</id>
    </interactant>
    <interactant intactId="EBI-373144">
        <id>Q9GZQ8</id>
        <label>MAP1LC3B</label>
    </interactant>
    <organismsDiffer>false</organismsDiffer>
    <experiments>4</experiments>
</comment>
<comment type="subcellular location">
    <subcellularLocation>
        <location evidence="4">Lysosome</location>
    </subcellularLocation>
    <subcellularLocation>
        <location evidence="4">Cytoplasmic vesicle</location>
        <location evidence="4">Autophagosome</location>
    </subcellularLocation>
</comment>
<comment type="induction">
    <text evidence="4">Not induced by interferons.</text>
</comment>
<comment type="domain">
    <text evidence="4">The LIR motifs (LC3-interacting region) are required for the interaction with ATG8 family proteins GABARAPL2 and MAP1LC3B/LC3B.</text>
</comment>
<comment type="similarity">
    <text evidence="2">Belongs to the TRAFAC class dynamin-like GTPase superfamily. IRG family.</text>
</comment>
<proteinExistence type="evidence at protein level"/>
<evidence type="ECO:0000255" key="1"/>
<evidence type="ECO:0000255" key="2">
    <source>
        <dbReference type="PROSITE-ProRule" id="PRU01053"/>
    </source>
</evidence>
<evidence type="ECO:0000256" key="3">
    <source>
        <dbReference type="SAM" id="MobiDB-lite"/>
    </source>
</evidence>
<evidence type="ECO:0000269" key="4">
    <source>
    </source>
</evidence>
<evidence type="ECO:0000303" key="5">
    <source>
    </source>
</evidence>
<evidence type="ECO:0000303" key="6">
    <source ref="1"/>
</evidence>
<evidence type="ECO:0000305" key="7"/>
<evidence type="ECO:0000312" key="8">
    <source>
        <dbReference type="HGNC" id="HGNC:24868"/>
    </source>
</evidence>
<evidence type="ECO:0007744" key="9">
    <source>
        <dbReference type="PDB" id="8Q6Q"/>
    </source>
</evidence>
<evidence type="ECO:0007744" key="10">
    <source>
        <dbReference type="PDB" id="8Q7K"/>
    </source>
</evidence>
<evidence type="ECO:0007744" key="11">
    <source>
    </source>
</evidence>
<evidence type="ECO:0007829" key="12">
    <source>
        <dbReference type="PDB" id="8Q6Q"/>
    </source>
</evidence>
<keyword id="KW-0002">3D-structure</keyword>
<keyword id="KW-0072">Autophagy</keyword>
<keyword id="KW-0175">Coiled coil</keyword>
<keyword id="KW-0968">Cytoplasmic vesicle</keyword>
<keyword id="KW-0903">Direct protein sequencing</keyword>
<keyword id="KW-1015">Disulfide bond</keyword>
<keyword id="KW-1017">Isopeptide bond</keyword>
<keyword id="KW-0458">Lysosome</keyword>
<keyword id="KW-0597">Phosphoprotein</keyword>
<keyword id="KW-1267">Proteomics identification</keyword>
<keyword id="KW-1185">Reference proteome</keyword>
<name>IRGQ_HUMAN</name>
<protein>
    <recommendedName>
        <fullName evidence="7">Immunity-related GTPase family Q protein</fullName>
    </recommendedName>
</protein>
<organism>
    <name type="scientific">Homo sapiens</name>
    <name type="common">Human</name>
    <dbReference type="NCBI Taxonomy" id="9606"/>
    <lineage>
        <taxon>Eukaryota</taxon>
        <taxon>Metazoa</taxon>
        <taxon>Chordata</taxon>
        <taxon>Craniata</taxon>
        <taxon>Vertebrata</taxon>
        <taxon>Euteleostomi</taxon>
        <taxon>Mammalia</taxon>
        <taxon>Eutheria</taxon>
        <taxon>Euarchontoglires</taxon>
        <taxon>Primates</taxon>
        <taxon>Haplorrhini</taxon>
        <taxon>Catarrhini</taxon>
        <taxon>Hominidae</taxon>
        <taxon>Homo</taxon>
    </lineage>
</organism>
<sequence>MPPPQGDVTALFLGPPGLGKSALIAALCDKDVETLEAPEGRPDSGVPSLRAAGPGLFLGELSCPPAAPGPWAAEANVLVLVLPGPEGNGEPLAPALGEAALAALARGTPLLAVRNLRPGDSQTAAQARDQTAALLNSAGLGAADLFVLPANCGSSDGCEELERLRAALQSQAEALRRLLPPAQDGFEVLGAAELEAVREAFETGGLEAALSWVRSGLERLGSARLDLAVAGKADVGLVVDMLLGLDPGDPGAAPASVPTAPTPFPAPERPNVVLWTVPLGHTGTATTAAAASHPTHYDALILVTPGAPTEKDWAQVQALLLPDAPLVCVRTDGEGEDPECLGEGKMENPKGESLKNAGGGGLENALSKGREKCSAGSQKAGSGEGPGKAGSEGLQQVVGMKKSGGGDSERAAALSPEDETWEVLEEAPPPVFPLRPGGLPGLCEWLRRALPPAQAGALLLALPPASPSAARTKAAALRAGAWRPALLASLAAAAAPLPGLGWACDVALLRGQLAEWRRGLGLEPTALARRERALGLASGELAARAHFPGPVTRAEVEARLGAWAGEGTAGGAALGALSFLWPAGGAAATGGLGYRAAHGVLLQALDEMRADAEAVLAPPEPAQ</sequence>
<feature type="chain" id="PRO_0000264463" description="Immunity-related GTPase family Q protein">
    <location>
        <begin position="1"/>
        <end position="623"/>
    </location>
</feature>
<feature type="domain" description="IRG-type G" evidence="2">
    <location>
        <begin position="223"/>
        <end position="449"/>
    </location>
</feature>
<feature type="region of interest" description="Disordered" evidence="3">
    <location>
        <begin position="334"/>
        <end position="393"/>
    </location>
</feature>
<feature type="coiled-coil region" evidence="1">
    <location>
        <begin position="155"/>
        <end position="180"/>
    </location>
</feature>
<feature type="short sequence motif" description="LIR 1" evidence="4">
    <location>
        <begin position="186"/>
        <end position="189"/>
    </location>
</feature>
<feature type="short sequence motif" description="LIR 2" evidence="4">
    <location>
        <begin position="421"/>
        <end position="424"/>
    </location>
</feature>
<feature type="compositionally biased region" description="Basic and acidic residues" evidence="3">
    <location>
        <begin position="342"/>
        <end position="353"/>
    </location>
</feature>
<feature type="modified residue" description="Phosphothreonine" evidence="11">
    <location>
        <position position="203"/>
    </location>
</feature>
<feature type="disulfide bond" evidence="9">
    <location>
        <begin position="152"/>
        <end position="158"/>
    </location>
</feature>
<feature type="mutagenesis site" description="Abolished interaction with GABARAPL2." evidence="4">
    <original>E</original>
    <variation>R</variation>
    <location>
        <position position="74"/>
    </location>
</feature>
<feature type="strand" evidence="12">
    <location>
        <begin position="8"/>
        <end position="14"/>
    </location>
</feature>
<feature type="helix" evidence="12">
    <location>
        <begin position="20"/>
        <end position="28"/>
    </location>
</feature>
<feature type="helix" evidence="12">
    <location>
        <begin position="32"/>
        <end position="34"/>
    </location>
</feature>
<feature type="strand" evidence="12">
    <location>
        <begin position="56"/>
        <end position="62"/>
    </location>
</feature>
<feature type="turn" evidence="12">
    <location>
        <begin position="63"/>
        <end position="65"/>
    </location>
</feature>
<feature type="helix" evidence="12">
    <location>
        <begin position="68"/>
        <end position="72"/>
    </location>
</feature>
<feature type="strand" evidence="12">
    <location>
        <begin position="76"/>
        <end position="82"/>
    </location>
</feature>
<feature type="strand" evidence="12">
    <location>
        <begin position="87"/>
        <end position="89"/>
    </location>
</feature>
<feature type="helix" evidence="12">
    <location>
        <begin position="94"/>
        <end position="105"/>
    </location>
</feature>
<feature type="strand" evidence="12">
    <location>
        <begin position="110"/>
        <end position="115"/>
    </location>
</feature>
<feature type="helix" evidence="12">
    <location>
        <begin position="124"/>
        <end position="137"/>
    </location>
</feature>
<feature type="strand" evidence="12">
    <location>
        <begin position="143"/>
        <end position="148"/>
    </location>
</feature>
<feature type="helix" evidence="12">
    <location>
        <begin position="159"/>
        <end position="175"/>
    </location>
</feature>
<feature type="helix" evidence="12">
    <location>
        <begin position="176"/>
        <end position="178"/>
    </location>
</feature>
<feature type="turn" evidence="12">
    <location>
        <begin position="182"/>
        <end position="185"/>
    </location>
</feature>
<reference key="1">
    <citation type="submission" date="2000-11" db="EMBL/GenBank/DDBJ databases">
        <title>Molecular cloning of FKSG27, a novel gene related to cervical tumor.</title>
        <authorList>
            <person name="Wang Y.-G."/>
            <person name="Gong L."/>
        </authorList>
    </citation>
    <scope>NUCLEOTIDE SEQUENCE [MRNA]</scope>
</reference>
<reference key="2">
    <citation type="submission" date="2005-07" db="EMBL/GenBank/DDBJ databases">
        <authorList>
            <person name="Mural R.J."/>
            <person name="Istrail S."/>
            <person name="Sutton G.G."/>
            <person name="Florea L."/>
            <person name="Halpern A.L."/>
            <person name="Mobarry C.M."/>
            <person name="Lippert R."/>
            <person name="Walenz B."/>
            <person name="Shatkay H."/>
            <person name="Dew I."/>
            <person name="Miller J.R."/>
            <person name="Flanigan M.J."/>
            <person name="Edwards N.J."/>
            <person name="Bolanos R."/>
            <person name="Fasulo D."/>
            <person name="Halldorsson B.V."/>
            <person name="Hannenhalli S."/>
            <person name="Turner R."/>
            <person name="Yooseph S."/>
            <person name="Lu F."/>
            <person name="Nusskern D.R."/>
            <person name="Shue B.C."/>
            <person name="Zheng X.H."/>
            <person name="Zhong F."/>
            <person name="Delcher A.L."/>
            <person name="Huson D.H."/>
            <person name="Kravitz S.A."/>
            <person name="Mouchard L."/>
            <person name="Reinert K."/>
            <person name="Remington K.A."/>
            <person name="Clark A.G."/>
            <person name="Waterman M.S."/>
            <person name="Eichler E.E."/>
            <person name="Adams M.D."/>
            <person name="Hunkapiller M.W."/>
            <person name="Myers E.W."/>
            <person name="Venter J.C."/>
        </authorList>
    </citation>
    <scope>NUCLEOTIDE SEQUENCE [LARGE SCALE GENOMIC DNA]</scope>
</reference>
<reference key="3">
    <citation type="journal article" date="2004" name="Genome Res.">
        <title>The status, quality, and expansion of the NIH full-length cDNA project: the Mammalian Gene Collection (MGC).</title>
        <authorList>
            <consortium name="The MGC Project Team"/>
        </authorList>
    </citation>
    <scope>NUCLEOTIDE SEQUENCE [LARGE SCALE MRNA]</scope>
    <source>
        <tissue>Brain</tissue>
    </source>
</reference>
<reference key="4">
    <citation type="submission" date="2008-12" db="UniProtKB">
        <authorList>
            <person name="Lubec G."/>
            <person name="Chen W.-Q."/>
            <person name="Sun Y."/>
        </authorList>
    </citation>
    <scope>PROTEIN SEQUENCE OF 2-20; 166-176; 178-214; 389-401; 533-544 AND 596-609</scope>
    <scope>IDENTIFICATION BY MASS SPECTROMETRY</scope>
    <source>
        <tissue>Fetal brain cortex</tissue>
    </source>
</reference>
<reference key="5">
    <citation type="journal article" date="2008" name="Proc. Natl. Acad. Sci. U.S.A.">
        <title>A quantitative atlas of mitotic phosphorylation.</title>
        <authorList>
            <person name="Dephoure N."/>
            <person name="Zhou C."/>
            <person name="Villen J."/>
            <person name="Beausoleil S.A."/>
            <person name="Bakalarski C.E."/>
            <person name="Elledge S.J."/>
            <person name="Gygi S.P."/>
        </authorList>
    </citation>
    <scope>PHOSPHORYLATION [LARGE SCALE ANALYSIS] AT THR-203</scope>
    <scope>IDENTIFICATION BY MASS SPECTROMETRY [LARGE SCALE ANALYSIS]</scope>
    <source>
        <tissue>Cervix carcinoma</tissue>
    </source>
</reference>
<reference key="6">
    <citation type="journal article" date="2011" name="BMC Syst. Biol.">
        <title>Initial characterization of the human central proteome.</title>
        <authorList>
            <person name="Burkard T.R."/>
            <person name="Planyavsky M."/>
            <person name="Kaupe I."/>
            <person name="Breitwieser F.P."/>
            <person name="Buerckstuemmer T."/>
            <person name="Bennett K.L."/>
            <person name="Superti-Furga G."/>
            <person name="Colinge J."/>
        </authorList>
    </citation>
    <scope>IDENTIFICATION BY MASS SPECTROMETRY [LARGE SCALE ANALYSIS]</scope>
</reference>
<reference key="7">
    <citation type="journal article" date="2014" name="J. Proteomics">
        <title>An enzyme assisted RP-RPLC approach for in-depth analysis of human liver phosphoproteome.</title>
        <authorList>
            <person name="Bian Y."/>
            <person name="Song C."/>
            <person name="Cheng K."/>
            <person name="Dong M."/>
            <person name="Wang F."/>
            <person name="Huang J."/>
            <person name="Sun D."/>
            <person name="Wang L."/>
            <person name="Ye M."/>
            <person name="Zou H."/>
        </authorList>
    </citation>
    <scope>IDENTIFICATION BY MASS SPECTROMETRY [LARGE SCALE ANALYSIS]</scope>
    <source>
        <tissue>Liver</tissue>
    </source>
</reference>
<reference evidence="9 10" key="8">
    <citation type="journal article" date="2024" name="Cell">
        <title>IRGQ-mediated autophagy in MHC class I quality control promotes tumor immune evasion.</title>
        <authorList>
            <person name="Herhaus L."/>
            <person name="Gestal-Mato U."/>
            <person name="Eapen V.V."/>
            <person name="Macinkovic I."/>
            <person name="Bailey H.J."/>
            <person name="Prieto-Garcia C."/>
            <person name="Misra M."/>
            <person name="Jacomin A.C."/>
            <person name="Ammanath A.V."/>
            <person name="Bagaric I."/>
            <person name="Michaelis J."/>
            <person name="Vollrath J."/>
            <person name="Bhaskara R.M."/>
            <person name="Buendgen G."/>
            <person name="Covarrubias-Pinto A."/>
            <person name="Husnjak K."/>
            <person name="Zoeller J."/>
            <person name="Gikandi A."/>
            <person name="Ribicic S."/>
            <person name="Bopp T."/>
            <person name="van der Heden van Noort G.J."/>
            <person name="Langer J.D."/>
            <person name="Weigert A."/>
            <person name="Harper J.W."/>
            <person name="Mancias J.D."/>
            <person name="Dikic I."/>
        </authorList>
    </citation>
    <scope>X-RAY CRYSTALLOGRAPHY (1.80 ANGSTROMS) OF 1-192 IN COMPLEX WITH MAP1LC3B</scope>
    <scope>DISULFIDE BOND</scope>
    <scope>FUNCTION</scope>
    <scope>SUBCELLULAR LOCATION</scope>
    <scope>INTERACTION WITH GABARAPL2 AND MAP1LC3B</scope>
    <scope>DOMAIN</scope>
    <scope>INDUCTION</scope>
    <scope>MUTAGENESIS OF GLU-74</scope>
</reference>